<comment type="function">
    <text evidence="1 10 12">Microtubule-associated protein that mediates aggregation of mitochondria resulting in cell death and genomic destruction (MAGD). Plays a role in anchoring the microtubule organizing center to the centrosomes. Binds to DNA. Plays a role in apoptosis. Involved in the formation of microtubule bundles (By similarity).</text>
</comment>
<comment type="subunit">
    <text evidence="1 4 5 6 7 9 10 11 13 15">Heterodimer of a heavy and a light chain. Interacts with microtubules and actin. Both MAP1S heavy and light chains interact with microtubules. MAP1S light chain interacts with actin. Interacts (via C-terminus) with GAN (via Kelch domains) (By similarity). Interacts with ESR1, LRPPRC, RASSF1 isoform A and isoform C, microtubules and VCY2. Interacts with WDR47 (via N-terminus of light chain).</text>
</comment>
<comment type="interaction">
    <interactant intactId="EBI-2133734">
        <id>Q66K74</id>
    </interactant>
    <interactant intactId="EBI-2133713">
        <id>O14599</id>
        <label>BPY2B</label>
    </interactant>
    <organismsDiffer>false</organismsDiffer>
    <experiments>3</experiments>
</comment>
<comment type="interaction">
    <interactant intactId="EBI-2133734">
        <id>Q66K74</id>
    </interactant>
    <interactant intactId="EBI-714146">
        <id>O14543</id>
        <label>SOCS3</label>
    </interactant>
    <organismsDiffer>false</organismsDiffer>
    <experiments>6</experiments>
</comment>
<comment type="subcellular location">
    <subcellularLocation>
        <location>Nucleus</location>
    </subcellularLocation>
    <subcellularLocation>
        <location>Cytoplasm</location>
        <location>Cytosol</location>
    </subcellularLocation>
    <subcellularLocation>
        <location evidence="14">Cytoplasm</location>
        <location evidence="14">Cytoskeleton</location>
    </subcellularLocation>
    <subcellularLocation>
        <location evidence="14">Cytoplasm</location>
        <location evidence="14">Cytoskeleton</location>
        <location evidence="14">Spindle</location>
    </subcellularLocation>
    <text evidence="1">Detected in filopodia-like protrusions and synapses (By similarity). Detected in perinuclear punctate network corresponding to mitochondrial aggregates and in the nucleus in cells exhibiting apoptosis. Associated specifically with microtubules stabilized by paclitaxel and colocalizes with RASSF1 isoform A. In interphase cells, shows a diffuse cytoplasmic staining with partial localization to the microtubules. During the different stages of mitosis detected at the spindle microtubules.</text>
</comment>
<comment type="alternative products">
    <event type="alternative splicing"/>
    <isoform>
        <id>Q66K74-1</id>
        <name>1</name>
        <sequence type="displayed"/>
    </isoform>
    <isoform>
        <id>Q66K74-2</id>
        <name>2</name>
        <sequence type="described" ref="VSP_056043"/>
    </isoform>
</comment>
<comment type="tissue specificity">
    <text evidence="4 6 13">Expressed in neurons (at protein level). Expressed in spermatocytes, spermatids and spermatozoa. Expressed in the cerebral cortex. Highly expressed in testis. Moderately expressed in the brain, colon, heart, kidney, liver, lung, placenta, small intestine, spleen and stomach. Weakly expressed in muscle.</text>
</comment>
<comment type="domain">
    <text evidence="1">The N-terminus of the heavy chain associates with the C-terminus of the light chain to form the heterodimer complex (By similarity). Its C-terminal part of the heavy chain interacts with ESR1.</text>
</comment>
<comment type="miscellaneous">
    <text>Depletion of MAP1S by RNAi causes mitotic abnormalities that consist of failure to form a stable metaphase plate, premature sister chromatid separation, lagging chromosomes, and multipolar spindles.</text>
</comment>
<comment type="similarity">
    <text evidence="17">Belongs to the MAP1 family.</text>
</comment>
<comment type="sequence caution" evidence="17">
    <conflict type="erroneous initiation">
        <sequence resource="EMBL-CDS" id="AAH07253"/>
    </conflict>
</comment>
<comment type="sequence caution" evidence="17">
    <conflict type="miscellaneous discrepancy">
        <sequence resource="EMBL-CDS" id="AAH07253"/>
    </conflict>
    <text>Contaminating sequence. At the N-terminus.</text>
</comment>
<comment type="sequence caution" evidence="17">
    <conflict type="erroneous initiation">
        <sequence resource="EMBL-CDS" id="AAH67115"/>
    </conflict>
</comment>
<comment type="sequence caution" evidence="17">
    <conflict type="erroneous initiation">
        <sequence resource="EMBL-CDS" id="BAA91743"/>
    </conflict>
</comment>
<comment type="sequence caution" evidence="17">
    <conflict type="erroneous initiation">
        <sequence resource="EMBL-CDS" id="BAB14415"/>
    </conflict>
</comment>
<comment type="sequence caution" evidence="17">
    <conflict type="frameshift">
        <sequence resource="EMBL-CDS" id="BAB55242"/>
    </conflict>
</comment>
<comment type="sequence caution" evidence="17">
    <conflict type="erroneous initiation">
        <sequence resource="EMBL-CDS" id="BAB93493"/>
    </conflict>
</comment>
<comment type="sequence caution" evidence="17">
    <conflict type="erroneous initiation">
        <sequence resource="EMBL-CDS" id="CAD38911"/>
    </conflict>
</comment>
<organism>
    <name type="scientific">Homo sapiens</name>
    <name type="common">Human</name>
    <dbReference type="NCBI Taxonomy" id="9606"/>
    <lineage>
        <taxon>Eukaryota</taxon>
        <taxon>Metazoa</taxon>
        <taxon>Chordata</taxon>
        <taxon>Craniata</taxon>
        <taxon>Vertebrata</taxon>
        <taxon>Euteleostomi</taxon>
        <taxon>Mammalia</taxon>
        <taxon>Eutheria</taxon>
        <taxon>Euarchontoglires</taxon>
        <taxon>Primates</taxon>
        <taxon>Haplorrhini</taxon>
        <taxon>Catarrhini</taxon>
        <taxon>Hominidae</taxon>
        <taxon>Homo</taxon>
    </lineage>
</organism>
<feature type="chain" id="PRO_0000311379" description="Microtubule-associated protein 1S">
    <location>
        <begin position="1"/>
        <end position="1059"/>
    </location>
</feature>
<feature type="chain" id="PRO_0000311380" description="MAP1S heavy chain">
    <location>
        <begin position="1"/>
        <end position="829"/>
    </location>
</feature>
<feature type="chain" id="PRO_0000311381" description="MAP1S light chain">
    <location>
        <begin position="830"/>
        <end position="1059"/>
    </location>
</feature>
<feature type="region of interest" description="Necessary for the microtubule-organizing center localization">
    <location>
        <begin position="1"/>
        <end position="797"/>
    </location>
</feature>
<feature type="region of interest" description="Disordered" evidence="3">
    <location>
        <begin position="461"/>
        <end position="733"/>
    </location>
</feature>
<feature type="region of interest" description="Necessary for interaction with RASSF1 isoform A and isoform C">
    <location>
        <begin position="666"/>
        <end position="1059"/>
    </location>
</feature>
<feature type="region of interest" description="Necessary for association with microtubules">
    <location>
        <begin position="714"/>
        <end position="966"/>
    </location>
</feature>
<feature type="region of interest" description="Disordered" evidence="3">
    <location>
        <begin position="751"/>
        <end position="942"/>
    </location>
</feature>
<feature type="region of interest" description="Necessary for association with actin" evidence="1">
    <location>
        <begin position="960"/>
        <end position="1059"/>
    </location>
</feature>
<feature type="region of interest" description="Necessary for the mitochondrial aggregation and genome destruction">
    <location>
        <begin position="967"/>
        <end position="991"/>
    </location>
</feature>
<feature type="compositionally biased region" description="Basic and acidic residues" evidence="3">
    <location>
        <begin position="466"/>
        <end position="486"/>
    </location>
</feature>
<feature type="compositionally biased region" description="Basic and acidic residues" evidence="3">
    <location>
        <begin position="494"/>
        <end position="530"/>
    </location>
</feature>
<feature type="compositionally biased region" description="Polar residues" evidence="3">
    <location>
        <begin position="547"/>
        <end position="557"/>
    </location>
</feature>
<feature type="compositionally biased region" description="Low complexity" evidence="3">
    <location>
        <begin position="591"/>
        <end position="603"/>
    </location>
</feature>
<feature type="compositionally biased region" description="Basic and acidic residues" evidence="3">
    <location>
        <begin position="642"/>
        <end position="652"/>
    </location>
</feature>
<feature type="compositionally biased region" description="Low complexity" evidence="3">
    <location>
        <begin position="670"/>
        <end position="680"/>
    </location>
</feature>
<feature type="compositionally biased region" description="Low complexity" evidence="3">
    <location>
        <begin position="759"/>
        <end position="769"/>
    </location>
</feature>
<feature type="compositionally biased region" description="Polar residues" evidence="3">
    <location>
        <begin position="783"/>
        <end position="796"/>
    </location>
</feature>
<feature type="compositionally biased region" description="Pro residues" evidence="3">
    <location>
        <begin position="825"/>
        <end position="836"/>
    </location>
</feature>
<feature type="compositionally biased region" description="Low complexity" evidence="3">
    <location>
        <begin position="873"/>
        <end position="887"/>
    </location>
</feature>
<feature type="compositionally biased region" description="Low complexity" evidence="3">
    <location>
        <begin position="923"/>
        <end position="936"/>
    </location>
</feature>
<feature type="modified residue" description="Phosphoserine" evidence="24 25">
    <location>
        <position position="321"/>
    </location>
</feature>
<feature type="modified residue" description="Phosphoserine" evidence="18 20 23 24">
    <location>
        <position position="472"/>
    </location>
</feature>
<feature type="modified residue" description="Phosphoserine" evidence="24">
    <location>
        <position position="582"/>
    </location>
</feature>
<feature type="modified residue" description="Phosphothreonine" evidence="24">
    <location>
        <position position="638"/>
    </location>
</feature>
<feature type="modified residue" description="Phosphoserine" evidence="20 24">
    <location>
        <position position="640"/>
    </location>
</feature>
<feature type="modified residue" description="Phosphoserine" evidence="24">
    <location>
        <position position="655"/>
    </location>
</feature>
<feature type="modified residue" description="Phosphoserine" evidence="20 23 24 25">
    <location>
        <position position="657"/>
    </location>
</feature>
<feature type="modified residue" description="Phosphoserine" evidence="2">
    <location>
        <position position="731"/>
    </location>
</feature>
<feature type="modified residue" description="Phosphoserine" evidence="19 20 21 22 23 24 25">
    <location>
        <position position="759"/>
    </location>
</feature>
<feature type="modified residue" description="Phosphoserine" evidence="22 23 25">
    <location>
        <position position="809"/>
    </location>
</feature>
<feature type="splice variant" id="VSP_056043" description="In isoform 2." evidence="16">
    <original>MAAVAGSGAAAAPSSLLLVVGSEFGSPGLLTYVLEELER</original>
    <variation>MAGMIDRFSPANT</variation>
    <location>
        <begin position="1"/>
        <end position="39"/>
    </location>
</feature>
<feature type="sequence variant" id="VAR_050023" description="In dbSNP:rs17710707.">
    <original>L</original>
    <variation>V</variation>
    <location>
        <position position="372"/>
    </location>
</feature>
<feature type="sequence variant" id="VAR_037236" description="In dbSNP:rs17710707." evidence="8">
    <original>S</original>
    <variation>C</variation>
    <location>
        <position position="411"/>
    </location>
</feature>
<feature type="sequence variant" id="VAR_037237" description="In dbSNP:rs7252905.">
    <original>P</original>
    <variation>Q</variation>
    <location>
        <position position="538"/>
    </location>
</feature>
<feature type="sequence conflict" description="In Ref. 1; CAD29574 and 3; BAB55242." evidence="17" ref="1 3">
    <original>P</original>
    <variation>L</variation>
    <location>
        <position position="120"/>
    </location>
</feature>
<feature type="sequence conflict" description="In Ref. 1; CAD29574 and 3; BAB55242." evidence="17" ref="1 3">
    <original>L</original>
    <variation>P</variation>
    <location>
        <position position="178"/>
    </location>
</feature>
<feature type="sequence conflict" description="In Ref. 4; CAD38911." evidence="17" ref="4">
    <original>C</original>
    <variation>Y</variation>
    <location>
        <position position="440"/>
    </location>
</feature>
<feature type="sequence conflict" description="In Ref. 7; BAB93493." evidence="17" ref="7">
    <original>T</original>
    <variation>A</variation>
    <location>
        <position position="521"/>
    </location>
</feature>
<feature type="sequence conflict" description="In Ref. 1; CAD29574 and 3; BAB55242." evidence="17" ref="1 3">
    <original>K</original>
    <variation>R</variation>
    <location>
        <position position="526"/>
    </location>
</feature>
<feature type="sequence conflict" description="In Ref. 3; BAB14415." evidence="17" ref="3">
    <original>F</original>
    <variation>L</variation>
    <location>
        <position position="967"/>
    </location>
</feature>
<feature type="sequence conflict" description="In Ref. 3; BAA91743." evidence="17" ref="3">
    <original>S</original>
    <variation>G</variation>
    <location>
        <position position="1043"/>
    </location>
</feature>
<dbReference type="EMBL" id="AJ440784">
    <property type="protein sequence ID" value="CAD29574.1"/>
    <property type="molecule type" value="mRNA"/>
</dbReference>
<dbReference type="EMBL" id="DQ387861">
    <property type="protein sequence ID" value="ABD47682.1"/>
    <property type="molecule type" value="mRNA"/>
</dbReference>
<dbReference type="EMBL" id="AK027623">
    <property type="protein sequence ID" value="BAB55242.1"/>
    <property type="status" value="ALT_FRAME"/>
    <property type="molecule type" value="mRNA"/>
</dbReference>
<dbReference type="EMBL" id="AK001531">
    <property type="protein sequence ID" value="BAA91743.1"/>
    <property type="status" value="ALT_INIT"/>
    <property type="molecule type" value="mRNA"/>
</dbReference>
<dbReference type="EMBL" id="AK023118">
    <property type="protein sequence ID" value="BAB14415.1"/>
    <property type="status" value="ALT_INIT"/>
    <property type="molecule type" value="mRNA"/>
</dbReference>
<dbReference type="EMBL" id="AK294936">
    <property type="protein sequence ID" value="BAG58014.1"/>
    <property type="molecule type" value="mRNA"/>
</dbReference>
<dbReference type="EMBL" id="AL834233">
    <property type="protein sequence ID" value="CAD38911.1"/>
    <property type="status" value="ALT_INIT"/>
    <property type="molecule type" value="mRNA"/>
</dbReference>
<dbReference type="EMBL" id="AC008761">
    <property type="status" value="NOT_ANNOTATED_CDS"/>
    <property type="molecule type" value="Genomic_DNA"/>
</dbReference>
<dbReference type="EMBL" id="BC006358">
    <property type="protein sequence ID" value="AAH06358.2"/>
    <property type="molecule type" value="mRNA"/>
</dbReference>
<dbReference type="EMBL" id="BC007253">
    <property type="protein sequence ID" value="AAH07253.1"/>
    <property type="status" value="ALT_INIT"/>
    <property type="molecule type" value="mRNA"/>
</dbReference>
<dbReference type="EMBL" id="BC008806">
    <property type="protein sequence ID" value="AAH08806.2"/>
    <property type="molecule type" value="mRNA"/>
</dbReference>
<dbReference type="EMBL" id="BC067115">
    <property type="protein sequence ID" value="AAH67115.1"/>
    <property type="status" value="ALT_INIT"/>
    <property type="molecule type" value="mRNA"/>
</dbReference>
<dbReference type="EMBL" id="BC080547">
    <property type="protein sequence ID" value="AAH80547.1"/>
    <property type="molecule type" value="mRNA"/>
</dbReference>
<dbReference type="EMBL" id="BC113952">
    <property type="protein sequence ID" value="AAI13953.1"/>
    <property type="molecule type" value="mRNA"/>
</dbReference>
<dbReference type="EMBL" id="AB062430">
    <property type="protein sequence ID" value="BAB93493.1"/>
    <property type="status" value="ALT_INIT"/>
    <property type="molecule type" value="mRNA"/>
</dbReference>
<dbReference type="CCDS" id="CCDS32954.1">
    <molecule id="Q66K74-1"/>
</dbReference>
<dbReference type="CCDS" id="CCDS77262.1">
    <molecule id="Q66K74-2"/>
</dbReference>
<dbReference type="RefSeq" id="NP_001295292.1">
    <molecule id="Q66K74-2"/>
    <property type="nucleotide sequence ID" value="NM_001308363.2"/>
</dbReference>
<dbReference type="RefSeq" id="NP_060644.4">
    <molecule id="Q66K74-1"/>
    <property type="nucleotide sequence ID" value="NM_018174.5"/>
</dbReference>
<dbReference type="BioGRID" id="120498">
    <property type="interactions" value="132"/>
</dbReference>
<dbReference type="FunCoup" id="Q66K74">
    <property type="interactions" value="528"/>
</dbReference>
<dbReference type="IntAct" id="Q66K74">
    <property type="interactions" value="82"/>
</dbReference>
<dbReference type="MINT" id="Q66K74"/>
<dbReference type="STRING" id="9606.ENSP00000325313"/>
<dbReference type="GlyGen" id="Q66K74">
    <property type="glycosylation" value="4 sites, 2 N-linked glycans (2 sites), 1 O-linked glycan (2 sites)"/>
</dbReference>
<dbReference type="iPTMnet" id="Q66K74"/>
<dbReference type="MetOSite" id="Q66K74"/>
<dbReference type="PhosphoSitePlus" id="Q66K74"/>
<dbReference type="SwissPalm" id="Q66K74"/>
<dbReference type="BioMuta" id="MAP1S"/>
<dbReference type="DMDM" id="160410004"/>
<dbReference type="jPOST" id="Q66K74"/>
<dbReference type="MassIVE" id="Q66K74"/>
<dbReference type="PaxDb" id="9606-ENSP00000325313"/>
<dbReference type="PeptideAtlas" id="Q66K74"/>
<dbReference type="ProteomicsDB" id="4197"/>
<dbReference type="ProteomicsDB" id="65957">
    <molecule id="Q66K74-1"/>
</dbReference>
<dbReference type="Pumba" id="Q66K74"/>
<dbReference type="Antibodypedia" id="27783">
    <property type="antibodies" value="195 antibodies from 26 providers"/>
</dbReference>
<dbReference type="DNASU" id="55201"/>
<dbReference type="Ensembl" id="ENST00000324096.9">
    <molecule id="Q66K74-1"/>
    <property type="protein sequence ID" value="ENSP00000325313.3"/>
    <property type="gene ID" value="ENSG00000130479.11"/>
</dbReference>
<dbReference type="Ensembl" id="ENST00000544059.2">
    <molecule id="Q66K74-2"/>
    <property type="protein sequence ID" value="ENSP00000439243.1"/>
    <property type="gene ID" value="ENSG00000130479.11"/>
</dbReference>
<dbReference type="GeneID" id="55201"/>
<dbReference type="KEGG" id="hsa:55201"/>
<dbReference type="MANE-Select" id="ENST00000324096.9">
    <property type="protein sequence ID" value="ENSP00000325313.3"/>
    <property type="RefSeq nucleotide sequence ID" value="NM_018174.6"/>
    <property type="RefSeq protein sequence ID" value="NP_060644.4"/>
</dbReference>
<dbReference type="UCSC" id="uc002nhe.2">
    <molecule id="Q66K74-1"/>
    <property type="organism name" value="human"/>
</dbReference>
<dbReference type="AGR" id="HGNC:15715"/>
<dbReference type="CTD" id="55201"/>
<dbReference type="DisGeNET" id="55201"/>
<dbReference type="GeneCards" id="MAP1S"/>
<dbReference type="HGNC" id="HGNC:15715">
    <property type="gene designation" value="MAP1S"/>
</dbReference>
<dbReference type="HPA" id="ENSG00000130479">
    <property type="expression patterns" value="Tissue enhanced (testis)"/>
</dbReference>
<dbReference type="MIM" id="607573">
    <property type="type" value="gene"/>
</dbReference>
<dbReference type="neXtProt" id="NX_Q66K74"/>
<dbReference type="OpenTargets" id="ENSG00000130479"/>
<dbReference type="PharmGKB" id="PA38031"/>
<dbReference type="VEuPathDB" id="HostDB:ENSG00000130479"/>
<dbReference type="eggNOG" id="KOG3592">
    <property type="taxonomic scope" value="Eukaryota"/>
</dbReference>
<dbReference type="GeneTree" id="ENSGT00940000160221"/>
<dbReference type="HOGENOM" id="CLU_000285_2_0_1"/>
<dbReference type="InParanoid" id="Q66K74"/>
<dbReference type="OMA" id="VMHEWYA"/>
<dbReference type="OrthoDB" id="5371837at2759"/>
<dbReference type="PAN-GO" id="Q66K74">
    <property type="GO annotations" value="12 GO annotations based on evolutionary models"/>
</dbReference>
<dbReference type="PhylomeDB" id="Q66K74"/>
<dbReference type="TreeFam" id="TF350229"/>
<dbReference type="PathwayCommons" id="Q66K74"/>
<dbReference type="SignaLink" id="Q66K74"/>
<dbReference type="SIGNOR" id="Q66K74"/>
<dbReference type="BioGRID-ORCS" id="55201">
    <property type="hits" value="18 hits in 1170 CRISPR screens"/>
</dbReference>
<dbReference type="CD-CODE" id="8C2F96ED">
    <property type="entry name" value="Centrosome"/>
</dbReference>
<dbReference type="ChiTaRS" id="MAP1S">
    <property type="organism name" value="human"/>
</dbReference>
<dbReference type="GeneWiki" id="MAP1S"/>
<dbReference type="GenomeRNAi" id="55201"/>
<dbReference type="Pharos" id="Q66K74">
    <property type="development level" value="Tbio"/>
</dbReference>
<dbReference type="PRO" id="PR:Q66K74"/>
<dbReference type="Proteomes" id="UP000005640">
    <property type="component" value="Chromosome 19"/>
</dbReference>
<dbReference type="RNAct" id="Q66K74">
    <property type="molecule type" value="protein"/>
</dbReference>
<dbReference type="Bgee" id="ENSG00000130479">
    <property type="expression patterns" value="Expressed in right testis and 186 other cell types or tissues"/>
</dbReference>
<dbReference type="ExpressionAtlas" id="Q66K74">
    <property type="expression patterns" value="baseline and differential"/>
</dbReference>
<dbReference type="GO" id="GO:0042995">
    <property type="term" value="C:cell projection"/>
    <property type="evidence" value="ECO:0000314"/>
    <property type="project" value="UniProtKB"/>
</dbReference>
<dbReference type="GO" id="GO:0005813">
    <property type="term" value="C:centrosome"/>
    <property type="evidence" value="ECO:0000314"/>
    <property type="project" value="ARUK-UCL"/>
</dbReference>
<dbReference type="GO" id="GO:0005829">
    <property type="term" value="C:cytosol"/>
    <property type="evidence" value="ECO:0000314"/>
    <property type="project" value="HGNC-UCL"/>
</dbReference>
<dbReference type="GO" id="GO:0030425">
    <property type="term" value="C:dendrite"/>
    <property type="evidence" value="ECO:0000250"/>
    <property type="project" value="HGNC-UCL"/>
</dbReference>
<dbReference type="GO" id="GO:0005874">
    <property type="term" value="C:microtubule"/>
    <property type="evidence" value="ECO:0000314"/>
    <property type="project" value="UniProtKB"/>
</dbReference>
<dbReference type="GO" id="GO:0005875">
    <property type="term" value="C:microtubule associated complex"/>
    <property type="evidence" value="ECO:0000318"/>
    <property type="project" value="GO_Central"/>
</dbReference>
<dbReference type="GO" id="GO:0005815">
    <property type="term" value="C:microtubule organizing center"/>
    <property type="evidence" value="ECO:0000314"/>
    <property type="project" value="ARUK-UCL"/>
</dbReference>
<dbReference type="GO" id="GO:1990498">
    <property type="term" value="C:mitotic spindle microtubule"/>
    <property type="evidence" value="ECO:0000314"/>
    <property type="project" value="ARUK-UCL"/>
</dbReference>
<dbReference type="GO" id="GO:0043025">
    <property type="term" value="C:neuronal cell body"/>
    <property type="evidence" value="ECO:0000250"/>
    <property type="project" value="HGNC-UCL"/>
</dbReference>
<dbReference type="GO" id="GO:0005730">
    <property type="term" value="C:nucleolus"/>
    <property type="evidence" value="ECO:0000314"/>
    <property type="project" value="HPA"/>
</dbReference>
<dbReference type="GO" id="GO:0005654">
    <property type="term" value="C:nucleoplasm"/>
    <property type="evidence" value="ECO:0000314"/>
    <property type="project" value="HPA"/>
</dbReference>
<dbReference type="GO" id="GO:0005634">
    <property type="term" value="C:nucleus"/>
    <property type="evidence" value="ECO:0000314"/>
    <property type="project" value="HGNC-UCL"/>
</dbReference>
<dbReference type="GO" id="GO:0048471">
    <property type="term" value="C:perinuclear region of cytoplasm"/>
    <property type="evidence" value="ECO:0000314"/>
    <property type="project" value="HGNC-UCL"/>
</dbReference>
<dbReference type="GO" id="GO:0005819">
    <property type="term" value="C:spindle"/>
    <property type="evidence" value="ECO:0000314"/>
    <property type="project" value="UniProtKB"/>
</dbReference>
<dbReference type="GO" id="GO:0045202">
    <property type="term" value="C:synapse"/>
    <property type="evidence" value="ECO:0000314"/>
    <property type="project" value="UniProtKB"/>
</dbReference>
<dbReference type="GO" id="GO:0003779">
    <property type="term" value="F:actin binding"/>
    <property type="evidence" value="ECO:0000318"/>
    <property type="project" value="GO_Central"/>
</dbReference>
<dbReference type="GO" id="GO:0051015">
    <property type="term" value="F:actin filament binding"/>
    <property type="evidence" value="ECO:0000314"/>
    <property type="project" value="HGNC-UCL"/>
</dbReference>
<dbReference type="GO" id="GO:0048487">
    <property type="term" value="F:beta-tubulin binding"/>
    <property type="evidence" value="ECO:0000314"/>
    <property type="project" value="HGNC-UCL"/>
</dbReference>
<dbReference type="GO" id="GO:0003677">
    <property type="term" value="F:DNA binding"/>
    <property type="evidence" value="ECO:0000314"/>
    <property type="project" value="HGNC-UCL"/>
</dbReference>
<dbReference type="GO" id="GO:0042802">
    <property type="term" value="F:identical protein binding"/>
    <property type="evidence" value="ECO:0007669"/>
    <property type="project" value="Ensembl"/>
</dbReference>
<dbReference type="GO" id="GO:0008017">
    <property type="term" value="F:microtubule binding"/>
    <property type="evidence" value="ECO:0000314"/>
    <property type="project" value="HGNC-UCL"/>
</dbReference>
<dbReference type="GO" id="GO:0015631">
    <property type="term" value="F:tubulin binding"/>
    <property type="evidence" value="ECO:0000314"/>
    <property type="project" value="HGNC-UCL"/>
</dbReference>
<dbReference type="GO" id="GO:0006915">
    <property type="term" value="P:apoptotic process"/>
    <property type="evidence" value="ECO:0007669"/>
    <property type="project" value="UniProtKB-KW"/>
</dbReference>
<dbReference type="GO" id="GO:0006914">
    <property type="term" value="P:autophagy"/>
    <property type="evidence" value="ECO:0000304"/>
    <property type="project" value="BHF-UCL"/>
</dbReference>
<dbReference type="GO" id="GO:0007409">
    <property type="term" value="P:axonogenesis"/>
    <property type="evidence" value="ECO:0000318"/>
    <property type="project" value="GO_Central"/>
</dbReference>
<dbReference type="GO" id="GO:0007420">
    <property type="term" value="P:brain development"/>
    <property type="evidence" value="ECO:0000250"/>
    <property type="project" value="HGNC-UCL"/>
</dbReference>
<dbReference type="GO" id="GO:0016358">
    <property type="term" value="P:dendrite development"/>
    <property type="evidence" value="ECO:0000318"/>
    <property type="project" value="GO_Central"/>
</dbReference>
<dbReference type="GO" id="GO:0051310">
    <property type="term" value="P:metaphase chromosome alignment"/>
    <property type="evidence" value="ECO:0000315"/>
    <property type="project" value="ARUK-UCL"/>
</dbReference>
<dbReference type="GO" id="GO:0034454">
    <property type="term" value="P:microtubule anchoring at centrosome"/>
    <property type="evidence" value="ECO:0000315"/>
    <property type="project" value="ARUK-UCL"/>
</dbReference>
<dbReference type="GO" id="GO:0001578">
    <property type="term" value="P:microtubule bundle formation"/>
    <property type="evidence" value="ECO:0000315"/>
    <property type="project" value="HGNC-UCL"/>
</dbReference>
<dbReference type="GO" id="GO:0000226">
    <property type="term" value="P:microtubule cytoskeleton organization"/>
    <property type="evidence" value="ECO:0000318"/>
    <property type="project" value="GO_Central"/>
</dbReference>
<dbReference type="GO" id="GO:0047497">
    <property type="term" value="P:mitochondrion transport along microtubule"/>
    <property type="evidence" value="ECO:0000304"/>
    <property type="project" value="HGNC-UCL"/>
</dbReference>
<dbReference type="GO" id="GO:0007052">
    <property type="term" value="P:mitotic spindle organization"/>
    <property type="evidence" value="ECO:0000315"/>
    <property type="project" value="ARUK-UCL"/>
</dbReference>
<dbReference type="GO" id="GO:0007399">
    <property type="term" value="P:nervous system development"/>
    <property type="evidence" value="ECO:0000250"/>
    <property type="project" value="HGNC-UCL"/>
</dbReference>
<dbReference type="GO" id="GO:0048812">
    <property type="term" value="P:neuron projection morphogenesis"/>
    <property type="evidence" value="ECO:0000270"/>
    <property type="project" value="HGNC-UCL"/>
</dbReference>
<dbReference type="GO" id="GO:0031114">
    <property type="term" value="P:regulation of microtubule depolymerization"/>
    <property type="evidence" value="ECO:0000318"/>
    <property type="project" value="GO_Central"/>
</dbReference>
<dbReference type="InterPro" id="IPR026074">
    <property type="entry name" value="MAP1"/>
</dbReference>
<dbReference type="InterPro" id="IPR056617">
    <property type="entry name" value="MAP1B/S_N"/>
</dbReference>
<dbReference type="PANTHER" id="PTHR13843">
    <property type="entry name" value="MICROTUBULE-ASSOCIATED PROTEIN"/>
    <property type="match status" value="1"/>
</dbReference>
<dbReference type="PANTHER" id="PTHR13843:SF11">
    <property type="entry name" value="MICROTUBULE-ASSOCIATED PROTEIN 1S"/>
    <property type="match status" value="1"/>
</dbReference>
<dbReference type="Pfam" id="PF23415">
    <property type="entry name" value="MAPB1_N"/>
    <property type="match status" value="1"/>
</dbReference>
<dbReference type="Pfam" id="PF25281">
    <property type="entry name" value="MBL_MAP1B"/>
    <property type="match status" value="2"/>
</dbReference>
<gene>
    <name type="primary">MAP1S</name>
    <name type="synonym">BPY2IP1</name>
    <name type="synonym">C19orf5</name>
    <name type="synonym">MAP8</name>
    <name type="synonym">VCY2IP1</name>
</gene>
<reference key="1">
    <citation type="journal article" date="2004" name="Biol. Reprod.">
        <title>Identification and characterization of a VCY2 interacting protein-1; VCY2IP-1, a MAP-like protein.</title>
        <authorList>
            <person name="Wong E.Y."/>
            <person name="Tse J.Y."/>
            <person name="Yao K.-M."/>
            <person name="Lui V.C."/>
            <person name="Tam P.-C."/>
            <person name="Yeung W.S."/>
        </authorList>
    </citation>
    <scope>NUCLEOTIDE SEQUENCE [MRNA] (ISOFORM 1)</scope>
    <scope>INTERACTION WITH VCY2</scope>
    <scope>TISSUE SPECIFICITY</scope>
    <source>
        <tissue>Testis</tissue>
    </source>
</reference>
<reference key="2">
    <citation type="journal article" date="2006" name="Biochem. Biophys. Res. Commun.">
        <title>Microtubule-associated protein 8 contains two microtubule binding sites.</title>
        <authorList>
            <person name="Ding J."/>
            <person name="Valle A."/>
            <person name="Allen E."/>
            <person name="Wang W."/>
            <person name="Nardine T."/>
            <person name="Zhang Y."/>
            <person name="Peng L."/>
            <person name="Yang Y."/>
        </authorList>
    </citation>
    <scope>NUCLEOTIDE SEQUENCE [MRNA] (ISOFORM 1)</scope>
</reference>
<reference key="3">
    <citation type="journal article" date="2004" name="Nat. Genet.">
        <title>Complete sequencing and characterization of 21,243 full-length human cDNAs.</title>
        <authorList>
            <person name="Ota T."/>
            <person name="Suzuki Y."/>
            <person name="Nishikawa T."/>
            <person name="Otsuki T."/>
            <person name="Sugiyama T."/>
            <person name="Irie R."/>
            <person name="Wakamatsu A."/>
            <person name="Hayashi K."/>
            <person name="Sato H."/>
            <person name="Nagai K."/>
            <person name="Kimura K."/>
            <person name="Makita H."/>
            <person name="Sekine M."/>
            <person name="Obayashi M."/>
            <person name="Nishi T."/>
            <person name="Shibahara T."/>
            <person name="Tanaka T."/>
            <person name="Ishii S."/>
            <person name="Yamamoto J."/>
            <person name="Saito K."/>
            <person name="Kawai Y."/>
            <person name="Isono Y."/>
            <person name="Nakamura Y."/>
            <person name="Nagahari K."/>
            <person name="Murakami K."/>
            <person name="Yasuda T."/>
            <person name="Iwayanagi T."/>
            <person name="Wagatsuma M."/>
            <person name="Shiratori A."/>
            <person name="Sudo H."/>
            <person name="Hosoiri T."/>
            <person name="Kaku Y."/>
            <person name="Kodaira H."/>
            <person name="Kondo H."/>
            <person name="Sugawara M."/>
            <person name="Takahashi M."/>
            <person name="Kanda K."/>
            <person name="Yokoi T."/>
            <person name="Furuya T."/>
            <person name="Kikkawa E."/>
            <person name="Omura Y."/>
            <person name="Abe K."/>
            <person name="Kamihara K."/>
            <person name="Katsuta N."/>
            <person name="Sato K."/>
            <person name="Tanikawa M."/>
            <person name="Yamazaki M."/>
            <person name="Ninomiya K."/>
            <person name="Ishibashi T."/>
            <person name="Yamashita H."/>
            <person name="Murakawa K."/>
            <person name="Fujimori K."/>
            <person name="Tanai H."/>
            <person name="Kimata M."/>
            <person name="Watanabe M."/>
            <person name="Hiraoka S."/>
            <person name="Chiba Y."/>
            <person name="Ishida S."/>
            <person name="Ono Y."/>
            <person name="Takiguchi S."/>
            <person name="Watanabe S."/>
            <person name="Yosida M."/>
            <person name="Hotuta T."/>
            <person name="Kusano J."/>
            <person name="Kanehori K."/>
            <person name="Takahashi-Fujii A."/>
            <person name="Hara H."/>
            <person name="Tanase T.-O."/>
            <person name="Nomura Y."/>
            <person name="Togiya S."/>
            <person name="Komai F."/>
            <person name="Hara R."/>
            <person name="Takeuchi K."/>
            <person name="Arita M."/>
            <person name="Imose N."/>
            <person name="Musashino K."/>
            <person name="Yuuki H."/>
            <person name="Oshima A."/>
            <person name="Sasaki N."/>
            <person name="Aotsuka S."/>
            <person name="Yoshikawa Y."/>
            <person name="Matsunawa H."/>
            <person name="Ichihara T."/>
            <person name="Shiohata N."/>
            <person name="Sano S."/>
            <person name="Moriya S."/>
            <person name="Momiyama H."/>
            <person name="Satoh N."/>
            <person name="Takami S."/>
            <person name="Terashima Y."/>
            <person name="Suzuki O."/>
            <person name="Nakagawa S."/>
            <person name="Senoh A."/>
            <person name="Mizoguchi H."/>
            <person name="Goto Y."/>
            <person name="Shimizu F."/>
            <person name="Wakebe H."/>
            <person name="Hishigaki H."/>
            <person name="Watanabe T."/>
            <person name="Sugiyama A."/>
            <person name="Takemoto M."/>
            <person name="Kawakami B."/>
            <person name="Yamazaki M."/>
            <person name="Watanabe K."/>
            <person name="Kumagai A."/>
            <person name="Itakura S."/>
            <person name="Fukuzumi Y."/>
            <person name="Fujimori Y."/>
            <person name="Komiyama M."/>
            <person name="Tashiro H."/>
            <person name="Tanigami A."/>
            <person name="Fujiwara T."/>
            <person name="Ono T."/>
            <person name="Yamada K."/>
            <person name="Fujii Y."/>
            <person name="Ozaki K."/>
            <person name="Hirao M."/>
            <person name="Ohmori Y."/>
            <person name="Kawabata A."/>
            <person name="Hikiji T."/>
            <person name="Kobatake N."/>
            <person name="Inagaki H."/>
            <person name="Ikema Y."/>
            <person name="Okamoto S."/>
            <person name="Okitani R."/>
            <person name="Kawakami T."/>
            <person name="Noguchi S."/>
            <person name="Itoh T."/>
            <person name="Shigeta K."/>
            <person name="Senba T."/>
            <person name="Matsumura K."/>
            <person name="Nakajima Y."/>
            <person name="Mizuno T."/>
            <person name="Morinaga M."/>
            <person name="Sasaki M."/>
            <person name="Togashi T."/>
            <person name="Oyama M."/>
            <person name="Hata H."/>
            <person name="Watanabe M."/>
            <person name="Komatsu T."/>
            <person name="Mizushima-Sugano J."/>
            <person name="Satoh T."/>
            <person name="Shirai Y."/>
            <person name="Takahashi Y."/>
            <person name="Nakagawa K."/>
            <person name="Okumura K."/>
            <person name="Nagase T."/>
            <person name="Nomura N."/>
            <person name="Kikuchi H."/>
            <person name="Masuho Y."/>
            <person name="Yamashita R."/>
            <person name="Nakai K."/>
            <person name="Yada T."/>
            <person name="Nakamura Y."/>
            <person name="Ohara O."/>
            <person name="Isogai T."/>
            <person name="Sugano S."/>
        </authorList>
    </citation>
    <scope>NUCLEOTIDE SEQUENCE [LARGE SCALE MRNA] (ISOFORMS 1 AND 2)</scope>
    <source>
        <tissue>Brain</tissue>
    </source>
</reference>
<reference key="4">
    <citation type="journal article" date="2007" name="BMC Genomics">
        <title>The full-ORF clone resource of the German cDNA consortium.</title>
        <authorList>
            <person name="Bechtel S."/>
            <person name="Rosenfelder H."/>
            <person name="Duda A."/>
            <person name="Schmidt C.P."/>
            <person name="Ernst U."/>
            <person name="Wellenreuther R."/>
            <person name="Mehrle A."/>
            <person name="Schuster C."/>
            <person name="Bahr A."/>
            <person name="Bloecker H."/>
            <person name="Heubner D."/>
            <person name="Hoerlein A."/>
            <person name="Michel G."/>
            <person name="Wedler H."/>
            <person name="Koehrer K."/>
            <person name="Ottenwaelder B."/>
            <person name="Poustka A."/>
            <person name="Wiemann S."/>
            <person name="Schupp I."/>
        </authorList>
    </citation>
    <scope>NUCLEOTIDE SEQUENCE [LARGE SCALE MRNA] (ISOFORM 1)</scope>
    <source>
        <tissue>Amygdala</tissue>
    </source>
</reference>
<reference key="5">
    <citation type="journal article" date="2004" name="Nature">
        <title>The DNA sequence and biology of human chromosome 19.</title>
        <authorList>
            <person name="Grimwood J."/>
            <person name="Gordon L.A."/>
            <person name="Olsen A.S."/>
            <person name="Terry A."/>
            <person name="Schmutz J."/>
            <person name="Lamerdin J.E."/>
            <person name="Hellsten U."/>
            <person name="Goodstein D."/>
            <person name="Couronne O."/>
            <person name="Tran-Gyamfi M."/>
            <person name="Aerts A."/>
            <person name="Altherr M."/>
            <person name="Ashworth L."/>
            <person name="Bajorek E."/>
            <person name="Black S."/>
            <person name="Branscomb E."/>
            <person name="Caenepeel S."/>
            <person name="Carrano A.V."/>
            <person name="Caoile C."/>
            <person name="Chan Y.M."/>
            <person name="Christensen M."/>
            <person name="Cleland C.A."/>
            <person name="Copeland A."/>
            <person name="Dalin E."/>
            <person name="Dehal P."/>
            <person name="Denys M."/>
            <person name="Detter J.C."/>
            <person name="Escobar J."/>
            <person name="Flowers D."/>
            <person name="Fotopulos D."/>
            <person name="Garcia C."/>
            <person name="Georgescu A.M."/>
            <person name="Glavina T."/>
            <person name="Gomez M."/>
            <person name="Gonzales E."/>
            <person name="Groza M."/>
            <person name="Hammon N."/>
            <person name="Hawkins T."/>
            <person name="Haydu L."/>
            <person name="Ho I."/>
            <person name="Huang W."/>
            <person name="Israni S."/>
            <person name="Jett J."/>
            <person name="Kadner K."/>
            <person name="Kimball H."/>
            <person name="Kobayashi A."/>
            <person name="Larionov V."/>
            <person name="Leem S.-H."/>
            <person name="Lopez F."/>
            <person name="Lou Y."/>
            <person name="Lowry S."/>
            <person name="Malfatti S."/>
            <person name="Martinez D."/>
            <person name="McCready P.M."/>
            <person name="Medina C."/>
            <person name="Morgan J."/>
            <person name="Nelson K."/>
            <person name="Nolan M."/>
            <person name="Ovcharenko I."/>
            <person name="Pitluck S."/>
            <person name="Pollard M."/>
            <person name="Popkie A.P."/>
            <person name="Predki P."/>
            <person name="Quan G."/>
            <person name="Ramirez L."/>
            <person name="Rash S."/>
            <person name="Retterer J."/>
            <person name="Rodriguez A."/>
            <person name="Rogers S."/>
            <person name="Salamov A."/>
            <person name="Salazar A."/>
            <person name="She X."/>
            <person name="Smith D."/>
            <person name="Slezak T."/>
            <person name="Solovyev V."/>
            <person name="Thayer N."/>
            <person name="Tice H."/>
            <person name="Tsai M."/>
            <person name="Ustaszewska A."/>
            <person name="Vo N."/>
            <person name="Wagner M."/>
            <person name="Wheeler J."/>
            <person name="Wu K."/>
            <person name="Xie G."/>
            <person name="Yang J."/>
            <person name="Dubchak I."/>
            <person name="Furey T.S."/>
            <person name="DeJong P."/>
            <person name="Dickson M."/>
            <person name="Gordon D."/>
            <person name="Eichler E.E."/>
            <person name="Pennacchio L.A."/>
            <person name="Richardson P."/>
            <person name="Stubbs L."/>
            <person name="Rokhsar D.S."/>
            <person name="Myers R.M."/>
            <person name="Rubin E.M."/>
            <person name="Lucas S.M."/>
        </authorList>
    </citation>
    <scope>NUCLEOTIDE SEQUENCE [LARGE SCALE GENOMIC DNA]</scope>
</reference>
<reference key="6">
    <citation type="journal article" date="2004" name="Genome Res.">
        <title>The status, quality, and expansion of the NIH full-length cDNA project: the Mammalian Gene Collection (MGC).</title>
        <authorList>
            <consortium name="The MGC Project Team"/>
        </authorList>
    </citation>
    <scope>NUCLEOTIDE SEQUENCE [LARGE SCALE MRNA] (ISOFORM 1)</scope>
    <scope>VARIANT CYS-411</scope>
    <source>
        <tissue>Brain</tissue>
        <tissue>Lung</tissue>
        <tissue>Lymph</tissue>
        <tissue>Muscle</tissue>
    </source>
</reference>
<reference key="7">
    <citation type="submission" date="2001-05" db="EMBL/GenBank/DDBJ databases">
        <title>Identification of immuno-peptidmics that recognized by tumor-reactive CTL generated from TIL of colon cancer patients.</title>
        <authorList>
            <person name="Shichijo S."/>
            <person name="Itoh K."/>
        </authorList>
    </citation>
    <scope>NUCLEOTIDE SEQUENCE [MRNA] OF 314-1059 (ISOFORM 1/2)</scope>
</reference>
<reference key="8">
    <citation type="journal article" date="2002" name="Genomics">
        <title>Sequence analysis of LRPPRC and its SEC1 domain interaction partners suggests roles in cytoskeletal organization, vesicular trafficking, nucleocytosolic shuttling, and chromosome activity.</title>
        <authorList>
            <person name="Liu L."/>
            <person name="McKeehan W.L."/>
        </authorList>
    </citation>
    <scope>INTERACTION WITH LRPPRC</scope>
    <scope>TISSUE SPECIFICITY</scope>
</reference>
<reference key="9">
    <citation type="journal article" date="2002" name="In Vitro Cell. Dev. Biol. Anim.">
        <title>Novel complex integrating mitochondria and the microtubular cytoskeleton with chromosome remodeling and tumor suppressor RASSF1 deduced by in silico homology analysis, interaction cloning in yeast, and colocalization in cultured cells.</title>
        <authorList>
            <person name="Liu L."/>
            <person name="Amy V."/>
            <person name="Liu G."/>
            <person name="McKeehan W.L."/>
        </authorList>
    </citation>
    <scope>INTERACTION WITH LRPPRC</scope>
    <scope>SUBCELLULAR LOCATION</scope>
</reference>
<reference key="10">
    <citation type="journal article" date="2004" name="Cancer Res.">
        <title>RASSF1A interacts with microtubule-associated proteins and modulates microtubule dynamics.</title>
        <authorList>
            <person name="Dallol A."/>
            <person name="Agathanggelou A."/>
            <person name="Fenton S.L."/>
            <person name="Ahmed-Choudhury J."/>
            <person name="Hesson L."/>
            <person name="Vos M.D."/>
            <person name="Clark G.J."/>
            <person name="Downward J."/>
            <person name="Maher E.R."/>
            <person name="Latif F."/>
        </authorList>
    </citation>
    <scope>INTERACTION WITH RASSF1</scope>
</reference>
<reference key="11">
    <citation type="journal article" date="2005" name="Biochem. Biophys. Res. Commun.">
        <title>Putative tumor suppressor RASSF1 interactive protein and cell death inducer C19ORF5 is a DNA binding protein.</title>
        <authorList>
            <person name="Liu L."/>
            <person name="Vo A."/>
            <person name="Liu G."/>
            <person name="McKeehan W.L."/>
        </authorList>
    </citation>
    <scope>INTERACTION WITH LRPPRC</scope>
    <scope>DNA-BINDING</scope>
</reference>
<reference key="12">
    <citation type="journal article" date="2005" name="Cancer Res.">
        <title>Specificity of the methylation-suppressed A isoform of candidate tumor suppressor RASSF1 for microtubule hyperstabilization is determined by cell death inducer C19ORF5.</title>
        <authorList>
            <person name="Liu L."/>
            <person name="Vo A."/>
            <person name="McKeehan W.L."/>
        </authorList>
    </citation>
    <scope>INTERACTION WITH RASSF1</scope>
    <scope>SUBCELLULAR LOCATION</scope>
</reference>
<reference key="13">
    <citation type="journal article" date="2005" name="Cancer Res.">
        <title>Distinct structural domains within C19ORF5 support association with stabilized microtubules and mitochondrial aggregation and genome destruction.</title>
        <authorList>
            <person name="Liu L."/>
            <person name="Vo A."/>
            <person name="Liu G."/>
            <person name="McKeehan W.L."/>
        </authorList>
    </citation>
    <scope>FUNCTION</scope>
    <scope>INTERACTION WITH MICROTUBULES</scope>
    <scope>SUBCELLULAR LOCATION</scope>
</reference>
<reference key="14">
    <citation type="journal article" date="2006" name="Cell">
        <title>Global, in vivo, and site-specific phosphorylation dynamics in signaling networks.</title>
        <authorList>
            <person name="Olsen J.V."/>
            <person name="Blagoev B."/>
            <person name="Gnad F."/>
            <person name="Macek B."/>
            <person name="Kumar C."/>
            <person name="Mortensen P."/>
            <person name="Mann M."/>
        </authorList>
    </citation>
    <scope>PHOSPHORYLATION [LARGE SCALE ANALYSIS] AT SER-472</scope>
    <scope>IDENTIFICATION BY MASS SPECTROMETRY [LARGE SCALE ANALYSIS]</scope>
    <source>
        <tissue>Cervix carcinoma</tissue>
    </source>
</reference>
<reference key="15">
    <citation type="journal article" date="2007" name="Biochem. Biophys. Res. Commun.">
        <title>The NMDAR subunit NR3A interacts with microtubule-associated protein 1S in the brain.</title>
        <authorList>
            <person name="Eriksson M."/>
            <person name="Samuelsson H."/>
            <person name="Samuelsson E.-B."/>
            <person name="Liu L."/>
            <person name="McKeehan W.L."/>
            <person name="Benedikz E."/>
            <person name="Sundstroem E."/>
        </authorList>
    </citation>
    <scope>INTERACTION WITH ESR1</scope>
    <scope>TISSUE SPECIFICITY</scope>
</reference>
<reference key="16">
    <citation type="journal article" date="2007" name="Cancer Res.">
        <title>Depletion of the Ras association domain family 1, isoform A-associated novel microtubule-associated protein, C19ORF5/MAP1S, causes mitotic abnormalities.</title>
        <authorList>
            <person name="Dallol A."/>
            <person name="Cooper W.N."/>
            <person name="Al-Mulla F."/>
            <person name="Agathanggelou A."/>
            <person name="Maher E.R."/>
            <person name="Latif F."/>
        </authorList>
    </citation>
    <scope>FUNCTION</scope>
    <scope>SUBCELLULAR LOCATION</scope>
</reference>
<reference key="17">
    <citation type="journal article" date="2008" name="Biochem. J.">
        <title>MAP1 structural organization in Drosophila: in vivo analysis of FUTSCH reveals heavy- and light-chain subunits generated by proteolytic processing at a conserved cleavage site.</title>
        <authorList>
            <person name="Zou B."/>
            <person name="Yan H."/>
            <person name="Kawasaki F."/>
            <person name="Ordway R.W."/>
        </authorList>
    </citation>
    <scope>CLEAVAGE SITE</scope>
</reference>
<reference key="18">
    <citation type="journal article" date="2008" name="J. Cell Sci.">
        <title>EML3 is a nuclear microtubule-binding protein required for the correct alignment of chromosomes in metaphase.</title>
        <authorList>
            <person name="Tegha-Dunghu J."/>
            <person name="Neumann B."/>
            <person name="Reber S."/>
            <person name="Krause R."/>
            <person name="Erfle H."/>
            <person name="Walter T."/>
            <person name="Held M."/>
            <person name="Rogers P."/>
            <person name="Hupfeld K."/>
            <person name="Ruppert T."/>
            <person name="Ellenberg J."/>
            <person name="Gruss O.J."/>
        </authorList>
    </citation>
    <scope>SUBCELLULAR LOCATION</scope>
</reference>
<reference key="19">
    <citation type="journal article" date="2008" name="J. Proteome Res.">
        <title>Combining protein-based IMAC, peptide-based IMAC, and MudPIT for efficient phosphoproteomic analysis.</title>
        <authorList>
            <person name="Cantin G.T."/>
            <person name="Yi W."/>
            <person name="Lu B."/>
            <person name="Park S.K."/>
            <person name="Xu T."/>
            <person name="Lee J.-D."/>
            <person name="Yates J.R. III"/>
        </authorList>
    </citation>
    <scope>PHOSPHORYLATION [LARGE SCALE ANALYSIS] AT SER-759</scope>
    <scope>IDENTIFICATION BY MASS SPECTROMETRY [LARGE SCALE ANALYSIS]</scope>
    <source>
        <tissue>Cervix carcinoma</tissue>
    </source>
</reference>
<reference key="20">
    <citation type="journal article" date="2008" name="Mol. Cell">
        <title>Kinase-selective enrichment enables quantitative phosphoproteomics of the kinome across the cell cycle.</title>
        <authorList>
            <person name="Daub H."/>
            <person name="Olsen J.V."/>
            <person name="Bairlein M."/>
            <person name="Gnad F."/>
            <person name="Oppermann F.S."/>
            <person name="Korner R."/>
            <person name="Greff Z."/>
            <person name="Keri G."/>
            <person name="Stemmann O."/>
            <person name="Mann M."/>
        </authorList>
    </citation>
    <scope>IDENTIFICATION BY MASS SPECTROMETRY [LARGE SCALE ANALYSIS]</scope>
    <source>
        <tissue>Cervix carcinoma</tissue>
    </source>
</reference>
<reference key="21">
    <citation type="journal article" date="2008" name="Proc. Natl. Acad. Sci. U.S.A.">
        <title>A quantitative atlas of mitotic phosphorylation.</title>
        <authorList>
            <person name="Dephoure N."/>
            <person name="Zhou C."/>
            <person name="Villen J."/>
            <person name="Beausoleil S.A."/>
            <person name="Bakalarski C.E."/>
            <person name="Elledge S.J."/>
            <person name="Gygi S.P."/>
        </authorList>
    </citation>
    <scope>PHOSPHORYLATION [LARGE SCALE ANALYSIS] AT SER-472; SER-640; SER-657 AND SER-759</scope>
    <scope>IDENTIFICATION BY MASS SPECTROMETRY [LARGE SCALE ANALYSIS]</scope>
    <source>
        <tissue>Cervix carcinoma</tissue>
    </source>
</reference>
<reference key="22">
    <citation type="journal article" date="2009" name="Anal. Chem.">
        <title>Lys-N and trypsin cover complementary parts of the phosphoproteome in a refined SCX-based approach.</title>
        <authorList>
            <person name="Gauci S."/>
            <person name="Helbig A.O."/>
            <person name="Slijper M."/>
            <person name="Krijgsveld J."/>
            <person name="Heck A.J."/>
            <person name="Mohammed S."/>
        </authorList>
    </citation>
    <scope>IDENTIFICATION BY MASS SPECTROMETRY [LARGE SCALE ANALYSIS]</scope>
</reference>
<reference key="23">
    <citation type="journal article" date="2009" name="Mol. Cell. Proteomics">
        <title>Large-scale proteomics analysis of the human kinome.</title>
        <authorList>
            <person name="Oppermann F.S."/>
            <person name="Gnad F."/>
            <person name="Olsen J.V."/>
            <person name="Hornberger R."/>
            <person name="Greff Z."/>
            <person name="Keri G."/>
            <person name="Mann M."/>
            <person name="Daub H."/>
        </authorList>
    </citation>
    <scope>PHOSPHORYLATION [LARGE SCALE ANALYSIS] AT SER-759</scope>
    <scope>IDENTIFICATION BY MASS SPECTROMETRY [LARGE SCALE ANALYSIS]</scope>
</reference>
<reference key="24">
    <citation type="journal article" date="2009" name="Sci. Signal.">
        <title>Quantitative phosphoproteomic analysis of T cell receptor signaling reveals system-wide modulation of protein-protein interactions.</title>
        <authorList>
            <person name="Mayya V."/>
            <person name="Lundgren D.H."/>
            <person name="Hwang S.-I."/>
            <person name="Rezaul K."/>
            <person name="Wu L."/>
            <person name="Eng J.K."/>
            <person name="Rodionov V."/>
            <person name="Han D.K."/>
        </authorList>
    </citation>
    <scope>IDENTIFICATION BY MASS SPECTROMETRY [LARGE SCALE ANALYSIS]</scope>
    <source>
        <tissue>Leukemic T-cell</tissue>
    </source>
</reference>
<reference key="25">
    <citation type="journal article" date="2010" name="Sci. Signal.">
        <title>Quantitative phosphoproteomics reveals widespread full phosphorylation site occupancy during mitosis.</title>
        <authorList>
            <person name="Olsen J.V."/>
            <person name="Vermeulen M."/>
            <person name="Santamaria A."/>
            <person name="Kumar C."/>
            <person name="Miller M.L."/>
            <person name="Jensen L.J."/>
            <person name="Gnad F."/>
            <person name="Cox J."/>
            <person name="Jensen T.S."/>
            <person name="Nigg E.A."/>
            <person name="Brunak S."/>
            <person name="Mann M."/>
        </authorList>
    </citation>
    <scope>PHOSPHORYLATION [LARGE SCALE ANALYSIS] AT SER-759 AND SER-809</scope>
    <scope>IDENTIFICATION BY MASS SPECTROMETRY [LARGE SCALE ANALYSIS]</scope>
    <source>
        <tissue>Cervix carcinoma</tissue>
    </source>
</reference>
<reference key="26">
    <citation type="journal article" date="2011" name="BMC Syst. Biol.">
        <title>Initial characterization of the human central proteome.</title>
        <authorList>
            <person name="Burkard T.R."/>
            <person name="Planyavsky M."/>
            <person name="Kaupe I."/>
            <person name="Breitwieser F.P."/>
            <person name="Buerckstuemmer T."/>
            <person name="Bennett K.L."/>
            <person name="Superti-Furga G."/>
            <person name="Colinge J."/>
        </authorList>
    </citation>
    <scope>IDENTIFICATION BY MASS SPECTROMETRY [LARGE SCALE ANALYSIS]</scope>
</reference>
<reference key="27">
    <citation type="journal article" date="2011" name="Sci. Signal.">
        <title>System-wide temporal characterization of the proteome and phosphoproteome of human embryonic stem cell differentiation.</title>
        <authorList>
            <person name="Rigbolt K.T."/>
            <person name="Prokhorova T.A."/>
            <person name="Akimov V."/>
            <person name="Henningsen J."/>
            <person name="Johansen P.T."/>
            <person name="Kratchmarova I."/>
            <person name="Kassem M."/>
            <person name="Mann M."/>
            <person name="Olsen J.V."/>
            <person name="Blagoev B."/>
        </authorList>
    </citation>
    <scope>PHOSPHORYLATION [LARGE SCALE ANALYSIS] AT SER-472; SER-657; SER-759 AND SER-809</scope>
    <scope>IDENTIFICATION BY MASS SPECTROMETRY [LARGE SCALE ANALYSIS]</scope>
</reference>
<reference key="28">
    <citation type="journal article" date="2012" name="PLoS ONE">
        <title>Nemitin, a novel Map8/Map1s interacting protein with Wd40 repeats.</title>
        <authorList>
            <person name="Wang W."/>
            <person name="Lundin V.F."/>
            <person name="Millan I."/>
            <person name="Zeng A."/>
            <person name="Chen X."/>
            <person name="Yang J."/>
            <person name="Allen E."/>
            <person name="Chen N."/>
            <person name="Bach G."/>
            <person name="Hsu A."/>
            <person name="Maloney M.T."/>
            <person name="Kapur M."/>
            <person name="Yang Y."/>
        </authorList>
    </citation>
    <scope>INTERACTION WITH WDR47</scope>
</reference>
<reference key="29">
    <citation type="journal article" date="2013" name="J. Proteome Res.">
        <title>Toward a comprehensive characterization of a human cancer cell phosphoproteome.</title>
        <authorList>
            <person name="Zhou H."/>
            <person name="Di Palma S."/>
            <person name="Preisinger C."/>
            <person name="Peng M."/>
            <person name="Polat A.N."/>
            <person name="Heck A.J."/>
            <person name="Mohammed S."/>
        </authorList>
    </citation>
    <scope>PHOSPHORYLATION [LARGE SCALE ANALYSIS] AT SER-321; SER-472; SER-582; THR-638; SER-640; SER-655; SER-657 AND SER-759</scope>
    <scope>IDENTIFICATION BY MASS SPECTROMETRY [LARGE SCALE ANALYSIS]</scope>
    <source>
        <tissue>Cervix carcinoma</tissue>
        <tissue>Erythroleukemia</tissue>
    </source>
</reference>
<reference key="30">
    <citation type="journal article" date="2014" name="J. Proteomics">
        <title>An enzyme assisted RP-RPLC approach for in-depth analysis of human liver phosphoproteome.</title>
        <authorList>
            <person name="Bian Y."/>
            <person name="Song C."/>
            <person name="Cheng K."/>
            <person name="Dong M."/>
            <person name="Wang F."/>
            <person name="Huang J."/>
            <person name="Sun D."/>
            <person name="Wang L."/>
            <person name="Ye M."/>
            <person name="Zou H."/>
        </authorList>
    </citation>
    <scope>PHOSPHORYLATION [LARGE SCALE ANALYSIS] AT SER-321; SER-657; SER-759 AND SER-809</scope>
    <scope>IDENTIFICATION BY MASS SPECTROMETRY [LARGE SCALE ANALYSIS]</scope>
    <source>
        <tissue>Liver</tissue>
    </source>
</reference>
<evidence type="ECO:0000250" key="1"/>
<evidence type="ECO:0000250" key="2">
    <source>
        <dbReference type="UniProtKB" id="Q8C052"/>
    </source>
</evidence>
<evidence type="ECO:0000256" key="3">
    <source>
        <dbReference type="SAM" id="MobiDB-lite"/>
    </source>
</evidence>
<evidence type="ECO:0000269" key="4">
    <source>
    </source>
</evidence>
<evidence type="ECO:0000269" key="5">
    <source>
    </source>
</evidence>
<evidence type="ECO:0000269" key="6">
    <source>
    </source>
</evidence>
<evidence type="ECO:0000269" key="7">
    <source>
    </source>
</evidence>
<evidence type="ECO:0000269" key="8">
    <source>
    </source>
</evidence>
<evidence type="ECO:0000269" key="9">
    <source>
    </source>
</evidence>
<evidence type="ECO:0000269" key="10">
    <source>
    </source>
</evidence>
<evidence type="ECO:0000269" key="11">
    <source>
    </source>
</evidence>
<evidence type="ECO:0000269" key="12">
    <source>
    </source>
</evidence>
<evidence type="ECO:0000269" key="13">
    <source>
    </source>
</evidence>
<evidence type="ECO:0000269" key="14">
    <source>
    </source>
</evidence>
<evidence type="ECO:0000269" key="15">
    <source>
    </source>
</evidence>
<evidence type="ECO:0000303" key="16">
    <source>
    </source>
</evidence>
<evidence type="ECO:0000305" key="17"/>
<evidence type="ECO:0007744" key="18">
    <source>
    </source>
</evidence>
<evidence type="ECO:0007744" key="19">
    <source>
    </source>
</evidence>
<evidence type="ECO:0007744" key="20">
    <source>
    </source>
</evidence>
<evidence type="ECO:0007744" key="21">
    <source>
    </source>
</evidence>
<evidence type="ECO:0007744" key="22">
    <source>
    </source>
</evidence>
<evidence type="ECO:0007744" key="23">
    <source>
    </source>
</evidence>
<evidence type="ECO:0007744" key="24">
    <source>
    </source>
</evidence>
<evidence type="ECO:0007744" key="25">
    <source>
    </source>
</evidence>
<sequence>MAAVAGSGAAAAPSSLLLVVGSEFGSPGLLTYVLEELERGIRSWDVDPGVCNLDEQLKVFVSRHSATFSSIVKGQRSLHHRGDNLETLVLLNPSDKSLYDELRNLLLDPASHKLLVLAGPCLEETGELLLQTGGFSPHHFLQVLKDREIRDILATTPPPVQPPILTITCPTFGDWAQLAPAVPGLQGALRLQLRLNPPAQLPNSEGLCEFLEYVAESLEPPSPFELLEPPTSGGFLRLGRPCCYIFPGGLGDAAFFAVNGFTVLVNGGSNPKSSFWKLVRHLDRVDAVLVTHPGADSLPGLNSLLRRKLAERSEVAAGGGSWDDRLRRLISPNLGVVFFNACEAASRLARGEDEAELALSLLAQLGITPLPLSRGPVPAKPTVLFEKMGVGRLDMYVLHPPSAGAERTLASVCALLVWHPAGPGEKVVRVLFPGCTPPACLLDGLVRLQHLRFLREPVVTPQDLEGPGRAESKESVGSRDSSKREGLLATHPRPGQERPGVARKEPARAEAPRKTEKEAKTPRELKKDPKPSVSRTQPREVRRAASSVPNLKKTNAQAAPKPRKAPSTSHSGFPPVANGPRSPPSLRCGEASPPSAACGSPASQLVATPSLELGPIPAGEEKALELPLAASSIPRPRTPSPESHRSPAEGSERLSLSPLRGGEAGPDASPTVTTPTVTTPSLPAEVGSPHSTEVDESLSVSFEQVLPPSAPTSEAGLSLPLRGPRARRSASPHDVDLCLVSPCEFEHRKAVPMAPAPASPGSSNDSSARSQERAGGLGAEETPPTSVSESLPTLSDSDPVPLAPGAADSDEDTEGFGVPRHDPLPDPLKVPPPLPDPSSICMVDPEMLPPKTARQTENVSRTRKPLARPNSRAAAPKATPVAAAKTKGLAGGDRASRPLSARSEPSEKGGRAPLSRKSSTPKTATRGPSGSASSRPGVSATPPKSPVYLDLAYLPSGSSAHLVDEEFFQRVRALCYVISGQDQRKEEGMRAVLDALLASKQHWDRDLQVTLIPTFDSVAMHTWYAETHARHQALGITVLGSNSMVSMQDDAFPACKVEF</sequence>
<proteinExistence type="evidence at protein level"/>
<keyword id="KW-0025">Alternative splicing</keyword>
<keyword id="KW-0053">Apoptosis</keyword>
<keyword id="KW-0963">Cytoplasm</keyword>
<keyword id="KW-0206">Cytoskeleton</keyword>
<keyword id="KW-0238">DNA-binding</keyword>
<keyword id="KW-0493">Microtubule</keyword>
<keyword id="KW-0539">Nucleus</keyword>
<keyword id="KW-0597">Phosphoprotein</keyword>
<keyword id="KW-1267">Proteomics identification</keyword>
<keyword id="KW-1185">Reference proteome</keyword>
<protein>
    <recommendedName>
        <fullName>Microtubule-associated protein 1S</fullName>
        <shortName>MAP-1S</shortName>
    </recommendedName>
    <alternativeName>
        <fullName>BPY2-interacting protein 1</fullName>
    </alternativeName>
    <alternativeName>
        <fullName>Microtubule-associated protein 8</fullName>
    </alternativeName>
    <alternativeName>
        <fullName>Variable charge Y chromosome 2-interacting protein 1</fullName>
        <shortName>VCY2-interacting protein 1</shortName>
        <shortName>VCY2IP-1</shortName>
    </alternativeName>
    <component>
        <recommendedName>
            <fullName>MAP1S heavy chain</fullName>
        </recommendedName>
    </component>
    <component>
        <recommendedName>
            <fullName>MAP1S light chain</fullName>
        </recommendedName>
    </component>
</protein>
<name>MAP1S_HUMAN</name>
<accession>Q66K74</accession>
<accession>B4DH53</accession>
<accession>Q27QB1</accession>
<accession>Q6NXF1</accession>
<accession>Q8N3L8</accession>
<accession>Q8N3W5</accession>
<accession>Q8NI88</accession>
<accession>Q96H94</accession>
<accession>Q96IT4</accession>
<accession>Q96SP8</accession>
<accession>Q9BRC6</accession>
<accession>Q9H928</accession>
<accession>Q9NVK7</accession>